<name>MIC12_VANPO</name>
<reference key="1">
    <citation type="journal article" date="2007" name="Proc. Natl. Acad. Sci. U.S.A.">
        <title>Independent sorting-out of thousands of duplicated gene pairs in two yeast species descended from a whole-genome duplication.</title>
        <authorList>
            <person name="Scannell D.R."/>
            <person name="Frank A.C."/>
            <person name="Conant G.C."/>
            <person name="Byrne K.P."/>
            <person name="Woolfit M."/>
            <person name="Wolfe K.H."/>
        </authorList>
    </citation>
    <scope>NUCLEOTIDE SEQUENCE [LARGE SCALE GENOMIC DNA]</scope>
    <source>
        <strain>ATCC 22028 / DSM 70294 / BCRC 21397 / CBS 2163 / NBRC 10782 / NRRL Y-8283 / UCD 57-17</strain>
    </source>
</reference>
<accession>A7TMN2</accession>
<protein>
    <recommendedName>
        <fullName>MICOS complex subunit MIC12</fullName>
    </recommendedName>
    <alternativeName>
        <fullName>Altered inheritance of mitochondria protein 5, mitochondrial</fullName>
    </alternativeName>
    <alternativeName>
        <fullName>Found in mitochondrial proteome protein 51</fullName>
    </alternativeName>
</protein>
<gene>
    <name type="primary">AIM5</name>
    <name type="synonym">FMP51</name>
    <name type="ORF">Kpol_1066p10</name>
</gene>
<comment type="function">
    <text evidence="1">Component of the MICOS complex, a large protein complex of the mitochondrial inner membrane that plays crucial roles in the maintenance of crista junctions, inner membrane architecture, and formation of contact sites to the outer membrane.</text>
</comment>
<comment type="subunit">
    <text evidence="1">Component of the mitochondrial contact site and cristae organizing system (MICOS) complex.</text>
</comment>
<comment type="subcellular location">
    <subcellularLocation>
        <location evidence="1">Mitochondrion inner membrane</location>
        <topology evidence="1">Single-pass membrane protein</topology>
    </subcellularLocation>
</comment>
<comment type="similarity">
    <text evidence="3">Belongs to the MICOS complex subunit Mic12 family.</text>
</comment>
<keyword id="KW-0472">Membrane</keyword>
<keyword id="KW-0496">Mitochondrion</keyword>
<keyword id="KW-0999">Mitochondrion inner membrane</keyword>
<keyword id="KW-1185">Reference proteome</keyword>
<keyword id="KW-0812">Transmembrane</keyword>
<keyword id="KW-1133">Transmembrane helix</keyword>
<dbReference type="EMBL" id="DS480424">
    <property type="protein sequence ID" value="EDO16446.1"/>
    <property type="molecule type" value="Genomic_DNA"/>
</dbReference>
<dbReference type="RefSeq" id="XP_001644304.1">
    <property type="nucleotide sequence ID" value="XM_001644254.1"/>
</dbReference>
<dbReference type="FunCoup" id="A7TMN2">
    <property type="interactions" value="58"/>
</dbReference>
<dbReference type="STRING" id="436907.A7TMN2"/>
<dbReference type="GeneID" id="5544603"/>
<dbReference type="KEGG" id="vpo:Kpol_1066p10"/>
<dbReference type="HOGENOM" id="CLU_164154_0_0_1"/>
<dbReference type="InParanoid" id="A7TMN2"/>
<dbReference type="OrthoDB" id="4037694at2759"/>
<dbReference type="PhylomeDB" id="A7TMN2"/>
<dbReference type="Proteomes" id="UP000000267">
    <property type="component" value="Unassembled WGS sequence"/>
</dbReference>
<dbReference type="GO" id="GO:0061617">
    <property type="term" value="C:MICOS complex"/>
    <property type="evidence" value="ECO:0007669"/>
    <property type="project" value="InterPro"/>
</dbReference>
<dbReference type="GO" id="GO:0044284">
    <property type="term" value="C:mitochondrial crista junction"/>
    <property type="evidence" value="ECO:0007669"/>
    <property type="project" value="InterPro"/>
</dbReference>
<dbReference type="GO" id="GO:0042407">
    <property type="term" value="P:cristae formation"/>
    <property type="evidence" value="ECO:0007669"/>
    <property type="project" value="InterPro"/>
</dbReference>
<dbReference type="InterPro" id="IPR031463">
    <property type="entry name" value="Mic12"/>
</dbReference>
<dbReference type="Pfam" id="PF17050">
    <property type="entry name" value="AIM5"/>
    <property type="match status" value="1"/>
</dbReference>
<proteinExistence type="inferred from homology"/>
<organism>
    <name type="scientific">Vanderwaltozyma polyspora (strain ATCC 22028 / DSM 70294 / BCRC 21397 / CBS 2163 / NBRC 10782 / NRRL Y-8283 / UCD 57-17)</name>
    <name type="common">Kluyveromyces polysporus</name>
    <dbReference type="NCBI Taxonomy" id="436907"/>
    <lineage>
        <taxon>Eukaryota</taxon>
        <taxon>Fungi</taxon>
        <taxon>Dikarya</taxon>
        <taxon>Ascomycota</taxon>
        <taxon>Saccharomycotina</taxon>
        <taxon>Saccharomycetes</taxon>
        <taxon>Saccharomycetales</taxon>
        <taxon>Saccharomycetaceae</taxon>
        <taxon>Vanderwaltozyma</taxon>
    </lineage>
</organism>
<evidence type="ECO:0000250" key="1"/>
<evidence type="ECO:0000255" key="2"/>
<evidence type="ECO:0000305" key="3"/>
<feature type="chain" id="PRO_0000399892" description="MICOS complex subunit MIC12">
    <location>
        <begin position="1"/>
        <end position="100"/>
    </location>
</feature>
<feature type="transmembrane region" description="Helical" evidence="2">
    <location>
        <begin position="10"/>
        <end position="26"/>
    </location>
</feature>
<sequence>MSKIWKFTSFATISSVAAASLYLYAIDKNGYYYEKSKFKQVTDRVRKLIDGDETFKYVTIDDFVSGPTQIQTRSRGETFKDLWNAEVRRTAQWIYSLGGR</sequence>